<dbReference type="EC" id="3.4.21.89" evidence="1"/>
<dbReference type="EMBL" id="FN393074">
    <property type="protein sequence ID" value="CAY80537.1"/>
    <property type="molecule type" value="Genomic_DNA"/>
</dbReference>
<dbReference type="SMR" id="C8ZAS4"/>
<dbReference type="MEROPS" id="S26.010"/>
<dbReference type="GlyCosmos" id="C8ZAS4">
    <property type="glycosylation" value="1 site, No reported glycans"/>
</dbReference>
<dbReference type="HOGENOM" id="CLU_089996_0_0_1"/>
<dbReference type="OrthoDB" id="23680at4893"/>
<dbReference type="Proteomes" id="UP000000286">
    <property type="component" value="Chromosome IX, Scaffold EC1118_1I12"/>
</dbReference>
<dbReference type="GO" id="GO:0005787">
    <property type="term" value="C:signal peptidase complex"/>
    <property type="evidence" value="ECO:0007669"/>
    <property type="project" value="UniProtKB-ARBA"/>
</dbReference>
<dbReference type="GO" id="GO:0004252">
    <property type="term" value="F:serine-type endopeptidase activity"/>
    <property type="evidence" value="ECO:0007669"/>
    <property type="project" value="UniProtKB-EC"/>
</dbReference>
<dbReference type="GO" id="GO:0006465">
    <property type="term" value="P:signal peptide processing"/>
    <property type="evidence" value="ECO:0007669"/>
    <property type="project" value="InterPro"/>
</dbReference>
<dbReference type="CDD" id="cd06462">
    <property type="entry name" value="Peptidase_S24_S26"/>
    <property type="match status" value="1"/>
</dbReference>
<dbReference type="InterPro" id="IPR036286">
    <property type="entry name" value="LexA/Signal_pep-like_sf"/>
</dbReference>
<dbReference type="InterPro" id="IPR019758">
    <property type="entry name" value="Pept_S26A_signal_pept_1_CS"/>
</dbReference>
<dbReference type="InterPro" id="IPR019756">
    <property type="entry name" value="Pept_S26A_signal_pept_1_Ser-AS"/>
</dbReference>
<dbReference type="InterPro" id="IPR015927">
    <property type="entry name" value="Peptidase_S24_S26A/B/C"/>
</dbReference>
<dbReference type="InterPro" id="IPR001733">
    <property type="entry name" value="Peptidase_S26B"/>
</dbReference>
<dbReference type="NCBIfam" id="TIGR02228">
    <property type="entry name" value="sigpep_I_arch"/>
    <property type="match status" value="1"/>
</dbReference>
<dbReference type="PANTHER" id="PTHR10806">
    <property type="entry name" value="SIGNAL PEPTIDASE COMPLEX CATALYTIC SUBUNIT SEC11"/>
    <property type="match status" value="1"/>
</dbReference>
<dbReference type="PANTHER" id="PTHR10806:SF6">
    <property type="entry name" value="SIGNAL PEPTIDASE COMPLEX CATALYTIC SUBUNIT SEC11"/>
    <property type="match status" value="1"/>
</dbReference>
<dbReference type="Pfam" id="PF00717">
    <property type="entry name" value="Peptidase_S24"/>
    <property type="match status" value="1"/>
</dbReference>
<dbReference type="PRINTS" id="PR00728">
    <property type="entry name" value="SIGNALPTASE"/>
</dbReference>
<dbReference type="SUPFAM" id="SSF51306">
    <property type="entry name" value="LexA/Signal peptidase"/>
    <property type="match status" value="1"/>
</dbReference>
<dbReference type="PROSITE" id="PS00501">
    <property type="entry name" value="SPASE_I_1"/>
    <property type="match status" value="1"/>
</dbReference>
<dbReference type="PROSITE" id="PS00761">
    <property type="entry name" value="SPASE_I_3"/>
    <property type="match status" value="1"/>
</dbReference>
<proteinExistence type="inferred from homology"/>
<gene>
    <name type="primary">SEC11</name>
    <name type="ORF">EC1118_1I12_2344g</name>
</gene>
<name>SEC11_YEAS8</name>
<evidence type="ECO:0000250" key="1">
    <source>
        <dbReference type="UniProtKB" id="P15367"/>
    </source>
</evidence>
<evidence type="ECO:0000250" key="2">
    <source>
        <dbReference type="UniProtKB" id="P67812"/>
    </source>
</evidence>
<evidence type="ECO:0000255" key="3"/>
<evidence type="ECO:0000305" key="4"/>
<accession>C8ZAS4</accession>
<organism>
    <name type="scientific">Saccharomyces cerevisiae (strain Lalvin EC1118 / Prise de mousse)</name>
    <name type="common">Baker's yeast</name>
    <dbReference type="NCBI Taxonomy" id="643680"/>
    <lineage>
        <taxon>Eukaryota</taxon>
        <taxon>Fungi</taxon>
        <taxon>Dikarya</taxon>
        <taxon>Ascomycota</taxon>
        <taxon>Saccharomycotina</taxon>
        <taxon>Saccharomycetes</taxon>
        <taxon>Saccharomycetales</taxon>
        <taxon>Saccharomycetaceae</taxon>
        <taxon>Saccharomyces</taxon>
    </lineage>
</organism>
<sequence length="167" mass="18762">MNLRFELQKLLNVCFLFASAYMFWQGLAIATNSASPIVVVLSGSMEPAFQRGDILFLWNRNTFNQVGDVVVYEVEGKQIPIVHRVLRQHNNHADKQFLLTKGDNNAGNDISLYANKKIYLNKSKEIVGTVKGYFPQLGYITIWISENKYAKFALLGMLGLSALLGGE</sequence>
<feature type="chain" id="PRO_0000412357" description="Signal peptidase complex catalytic subunit SEC11">
    <location>
        <begin position="1"/>
        <end position="167"/>
    </location>
</feature>
<feature type="topological domain" description="Cytoplasmic" evidence="3">
    <location>
        <begin position="1"/>
        <end position="9"/>
    </location>
</feature>
<feature type="transmembrane region" description="Helical; Signal-anchor for type II membrane protein" evidence="3">
    <location>
        <begin position="10"/>
        <end position="30"/>
    </location>
</feature>
<feature type="topological domain" description="Lumenal" evidence="3">
    <location>
        <begin position="31"/>
        <end position="167"/>
    </location>
</feature>
<feature type="region of interest" description="C-terminal short (CTS) helix" evidence="2">
    <location>
        <begin position="153"/>
        <end position="164"/>
    </location>
</feature>
<feature type="active site" description="Charge relay system" evidence="1">
    <location>
        <position position="44"/>
    </location>
</feature>
<feature type="active site" description="Charge relay system" evidence="1">
    <location>
        <position position="83"/>
    </location>
</feature>
<feature type="active site" description="Charge relay system" evidence="1">
    <location>
        <position position="109"/>
    </location>
</feature>
<feature type="glycosylation site" description="N-linked (GlcNAc...) asparagine" evidence="3">
    <location>
        <position position="121"/>
    </location>
</feature>
<reference key="1">
    <citation type="journal article" date="2009" name="Proc. Natl. Acad. Sci. U.S.A.">
        <title>Eukaryote-to-eukaryote gene transfer events revealed by the genome sequence of the wine yeast Saccharomyces cerevisiae EC1118.</title>
        <authorList>
            <person name="Novo M."/>
            <person name="Bigey F."/>
            <person name="Beyne E."/>
            <person name="Galeote V."/>
            <person name="Gavory F."/>
            <person name="Mallet S."/>
            <person name="Cambon B."/>
            <person name="Legras J.-L."/>
            <person name="Wincker P."/>
            <person name="Casaregola S."/>
            <person name="Dequin S."/>
        </authorList>
    </citation>
    <scope>NUCLEOTIDE SEQUENCE [LARGE SCALE GENOMIC DNA]</scope>
    <source>
        <strain>Lalvin EC1118 / Prise de mousse</strain>
    </source>
</reference>
<keyword id="KW-0256">Endoplasmic reticulum</keyword>
<keyword id="KW-0325">Glycoprotein</keyword>
<keyword id="KW-0378">Hydrolase</keyword>
<keyword id="KW-0472">Membrane</keyword>
<keyword id="KW-0645">Protease</keyword>
<keyword id="KW-0735">Signal-anchor</keyword>
<keyword id="KW-0812">Transmembrane</keyword>
<keyword id="KW-1133">Transmembrane helix</keyword>
<protein>
    <recommendedName>
        <fullName>Signal peptidase complex catalytic subunit SEC11</fullName>
        <ecNumber evidence="1">3.4.21.89</ecNumber>
    </recommendedName>
    <alternativeName>
        <fullName>Secretory protein 11</fullName>
    </alternativeName>
    <alternativeName>
        <fullName>Signal peptidase I</fullName>
    </alternativeName>
</protein>
<comment type="function">
    <text evidence="1 2">Catalytic component of the signal peptidase complex (SPC) which catalyzes the cleavage of N-terminal signal sequences from nascent proteins as they are translocated into the lumen of the endoplasmic reticulum (By similarity). Specifically cleaves N-terminal signal peptides that contain a hydrophobic alpha-helix (h-region) shorter than 18-20 amino acids (By similarity).</text>
</comment>
<comment type="catalytic activity">
    <reaction evidence="1">
        <text>Cleavage of hydrophobic, N-terminal signal or leader sequences from secreted and periplasmic proteins.</text>
        <dbReference type="EC" id="3.4.21.89"/>
    </reaction>
</comment>
<comment type="subunit">
    <text evidence="1 2">Component of the signal peptidase complex (SPC) composed of a catalytic subunit SEC11 and three accessory subunits SPC1, SPC2 and SPC3 (By similarity). The complex induces a local thinning of the ER membrane which is used to measure the length of the signal peptide (SP) h-region of protein substrates. This ensures the selectivity of the complex towards h-regions shorter than 18-20 amino acids (By similarity). SPC associates with the translocon complex (By similarity).</text>
</comment>
<comment type="subcellular location">
    <subcellularLocation>
        <location evidence="1">Endoplasmic reticulum membrane</location>
        <topology evidence="1">Single-pass type II membrane protein</topology>
    </subcellularLocation>
</comment>
<comment type="domain">
    <text evidence="2">The C-terminal short (CTS) helix is essential for catalytic activity. It may be accommodated as a transmembrane helix in the thinned membrane environment of the complex, similarly to the signal peptide in the complex substrates.</text>
</comment>
<comment type="similarity">
    <text evidence="4">Belongs to the peptidase S26B family.</text>
</comment>